<dbReference type="EMBL" id="CP000246">
    <property type="protein sequence ID" value="ABG84139.1"/>
    <property type="molecule type" value="Genomic_DNA"/>
</dbReference>
<dbReference type="RefSeq" id="WP_003481965.1">
    <property type="nucleotide sequence ID" value="NC_008261.1"/>
</dbReference>
<dbReference type="SMR" id="Q0TP12"/>
<dbReference type="STRING" id="195103.CPF_2204"/>
<dbReference type="PaxDb" id="195103-CPF_2204"/>
<dbReference type="KEGG" id="cpf:CPF_2204"/>
<dbReference type="eggNOG" id="COG0632">
    <property type="taxonomic scope" value="Bacteria"/>
</dbReference>
<dbReference type="HOGENOM" id="CLU_087936_3_0_9"/>
<dbReference type="Proteomes" id="UP000001823">
    <property type="component" value="Chromosome"/>
</dbReference>
<dbReference type="GO" id="GO:0005737">
    <property type="term" value="C:cytoplasm"/>
    <property type="evidence" value="ECO:0007669"/>
    <property type="project" value="UniProtKB-SubCell"/>
</dbReference>
<dbReference type="GO" id="GO:0009379">
    <property type="term" value="C:Holliday junction helicase complex"/>
    <property type="evidence" value="ECO:0007669"/>
    <property type="project" value="InterPro"/>
</dbReference>
<dbReference type="GO" id="GO:0048476">
    <property type="term" value="C:Holliday junction resolvase complex"/>
    <property type="evidence" value="ECO:0007669"/>
    <property type="project" value="UniProtKB-UniRule"/>
</dbReference>
<dbReference type="GO" id="GO:0005524">
    <property type="term" value="F:ATP binding"/>
    <property type="evidence" value="ECO:0007669"/>
    <property type="project" value="InterPro"/>
</dbReference>
<dbReference type="GO" id="GO:0000400">
    <property type="term" value="F:four-way junction DNA binding"/>
    <property type="evidence" value="ECO:0007669"/>
    <property type="project" value="UniProtKB-UniRule"/>
</dbReference>
<dbReference type="GO" id="GO:0009378">
    <property type="term" value="F:four-way junction helicase activity"/>
    <property type="evidence" value="ECO:0007669"/>
    <property type="project" value="InterPro"/>
</dbReference>
<dbReference type="GO" id="GO:0006310">
    <property type="term" value="P:DNA recombination"/>
    <property type="evidence" value="ECO:0007669"/>
    <property type="project" value="UniProtKB-UniRule"/>
</dbReference>
<dbReference type="GO" id="GO:0006281">
    <property type="term" value="P:DNA repair"/>
    <property type="evidence" value="ECO:0007669"/>
    <property type="project" value="UniProtKB-UniRule"/>
</dbReference>
<dbReference type="CDD" id="cd14332">
    <property type="entry name" value="UBA_RuvA_C"/>
    <property type="match status" value="1"/>
</dbReference>
<dbReference type="Gene3D" id="1.10.150.20">
    <property type="entry name" value="5' to 3' exonuclease, C-terminal subdomain"/>
    <property type="match status" value="1"/>
</dbReference>
<dbReference type="Gene3D" id="1.10.8.10">
    <property type="entry name" value="DNA helicase RuvA subunit, C-terminal domain"/>
    <property type="match status" value="1"/>
</dbReference>
<dbReference type="Gene3D" id="2.40.50.140">
    <property type="entry name" value="Nucleic acid-binding proteins"/>
    <property type="match status" value="1"/>
</dbReference>
<dbReference type="HAMAP" id="MF_00031">
    <property type="entry name" value="DNA_HJ_migration_RuvA"/>
    <property type="match status" value="1"/>
</dbReference>
<dbReference type="InterPro" id="IPR013849">
    <property type="entry name" value="DNA_helicase_Holl-junc_RuvA_I"/>
</dbReference>
<dbReference type="InterPro" id="IPR003583">
    <property type="entry name" value="Hlx-hairpin-Hlx_DNA-bd_motif"/>
</dbReference>
<dbReference type="InterPro" id="IPR012340">
    <property type="entry name" value="NA-bd_OB-fold"/>
</dbReference>
<dbReference type="InterPro" id="IPR000085">
    <property type="entry name" value="RuvA"/>
</dbReference>
<dbReference type="InterPro" id="IPR010994">
    <property type="entry name" value="RuvA_2-like"/>
</dbReference>
<dbReference type="InterPro" id="IPR011114">
    <property type="entry name" value="RuvA_C"/>
</dbReference>
<dbReference type="InterPro" id="IPR036267">
    <property type="entry name" value="RuvA_C_sf"/>
</dbReference>
<dbReference type="NCBIfam" id="TIGR00084">
    <property type="entry name" value="ruvA"/>
    <property type="match status" value="1"/>
</dbReference>
<dbReference type="Pfam" id="PF14520">
    <property type="entry name" value="HHH_5"/>
    <property type="match status" value="1"/>
</dbReference>
<dbReference type="Pfam" id="PF07499">
    <property type="entry name" value="RuvA_C"/>
    <property type="match status" value="1"/>
</dbReference>
<dbReference type="Pfam" id="PF01330">
    <property type="entry name" value="RuvA_N"/>
    <property type="match status" value="1"/>
</dbReference>
<dbReference type="SMART" id="SM00278">
    <property type="entry name" value="HhH1"/>
    <property type="match status" value="2"/>
</dbReference>
<dbReference type="SUPFAM" id="SSF46929">
    <property type="entry name" value="DNA helicase RuvA subunit, C-terminal domain"/>
    <property type="match status" value="1"/>
</dbReference>
<dbReference type="SUPFAM" id="SSF50249">
    <property type="entry name" value="Nucleic acid-binding proteins"/>
    <property type="match status" value="1"/>
</dbReference>
<dbReference type="SUPFAM" id="SSF47781">
    <property type="entry name" value="RuvA domain 2-like"/>
    <property type="match status" value="1"/>
</dbReference>
<feature type="chain" id="PRO_1000002433" description="Holliday junction branch migration complex subunit RuvA">
    <location>
        <begin position="1"/>
        <end position="201"/>
    </location>
</feature>
<feature type="region of interest" description="Domain I" evidence="1">
    <location>
        <begin position="1"/>
        <end position="64"/>
    </location>
</feature>
<feature type="region of interest" description="Domain II" evidence="1">
    <location>
        <begin position="65"/>
        <end position="143"/>
    </location>
</feature>
<feature type="region of interest" description="Flexible linker" evidence="1">
    <location>
        <begin position="144"/>
        <end position="152"/>
    </location>
</feature>
<feature type="region of interest" description="Domain III" evidence="1">
    <location>
        <begin position="153"/>
        <end position="201"/>
    </location>
</feature>
<comment type="function">
    <text evidence="1">The RuvA-RuvB-RuvC complex processes Holliday junction (HJ) DNA during genetic recombination and DNA repair, while the RuvA-RuvB complex plays an important role in the rescue of blocked DNA replication forks via replication fork reversal (RFR). RuvA specifically binds to HJ cruciform DNA, conferring on it an open structure. The RuvB hexamer acts as an ATP-dependent pump, pulling dsDNA into and through the RuvAB complex. HJ branch migration allows RuvC to scan DNA until it finds its consensus sequence, where it cleaves and resolves the cruciform DNA.</text>
</comment>
<comment type="subunit">
    <text evidence="1">Homotetramer. Forms an RuvA(8)-RuvB(12)-Holliday junction (HJ) complex. HJ DNA is sandwiched between 2 RuvA tetramers; dsDNA enters through RuvA and exits via RuvB. An RuvB hexamer assembles on each DNA strand where it exits the tetramer. Each RuvB hexamer is contacted by two RuvA subunits (via domain III) on 2 adjacent RuvB subunits; this complex drives branch migration. In the full resolvosome a probable DNA-RuvA(4)-RuvB(12)-RuvC(2) complex forms which resolves the HJ.</text>
</comment>
<comment type="subcellular location">
    <subcellularLocation>
        <location evidence="1">Cytoplasm</location>
    </subcellularLocation>
</comment>
<comment type="domain">
    <text evidence="1">Has three domains with a flexible linker between the domains II and III and assumes an 'L' shape. Domain III is highly mobile and contacts RuvB.</text>
</comment>
<comment type="similarity">
    <text evidence="1">Belongs to the RuvA family.</text>
</comment>
<proteinExistence type="inferred from homology"/>
<organism>
    <name type="scientific">Clostridium perfringens (strain ATCC 13124 / DSM 756 / JCM 1290 / NCIMB 6125 / NCTC 8237 / Type A)</name>
    <dbReference type="NCBI Taxonomy" id="195103"/>
    <lineage>
        <taxon>Bacteria</taxon>
        <taxon>Bacillati</taxon>
        <taxon>Bacillota</taxon>
        <taxon>Clostridia</taxon>
        <taxon>Eubacteriales</taxon>
        <taxon>Clostridiaceae</taxon>
        <taxon>Clostridium</taxon>
    </lineage>
</organism>
<name>RUVA_CLOP1</name>
<keyword id="KW-0963">Cytoplasm</keyword>
<keyword id="KW-0227">DNA damage</keyword>
<keyword id="KW-0233">DNA recombination</keyword>
<keyword id="KW-0234">DNA repair</keyword>
<keyword id="KW-0238">DNA-binding</keyword>
<accession>Q0TP12</accession>
<protein>
    <recommendedName>
        <fullName evidence="1">Holliday junction branch migration complex subunit RuvA</fullName>
    </recommendedName>
</protein>
<gene>
    <name evidence="1" type="primary">ruvA</name>
    <name type="ordered locus">CPF_2204</name>
</gene>
<evidence type="ECO:0000255" key="1">
    <source>
        <dbReference type="HAMAP-Rule" id="MF_00031"/>
    </source>
</evidence>
<sequence>MYEYIRGQFQGISKDYVVIELNNIGYKIFTSGNTMSNMPKVGEEVLLYLEQIVREDFIGLYGFTTREELEMFKLLLSINGVGAKAALSLLSISTVNNLKYAIMMGDEKHITRAPGIGKKTAQRIILELKDKLKPDELTSEEGELIEGINDNSDYSFNINETLSALMALGYTEKEAQKALEKVDKTLSIENMIKESLKLLMR</sequence>
<reference key="1">
    <citation type="journal article" date="2006" name="Genome Res.">
        <title>Skewed genomic variability in strains of the toxigenic bacterial pathogen, Clostridium perfringens.</title>
        <authorList>
            <person name="Myers G.S.A."/>
            <person name="Rasko D.A."/>
            <person name="Cheung J.K."/>
            <person name="Ravel J."/>
            <person name="Seshadri R."/>
            <person name="DeBoy R.T."/>
            <person name="Ren Q."/>
            <person name="Varga J."/>
            <person name="Awad M.M."/>
            <person name="Brinkac L.M."/>
            <person name="Daugherty S.C."/>
            <person name="Haft D.H."/>
            <person name="Dodson R.J."/>
            <person name="Madupu R."/>
            <person name="Nelson W.C."/>
            <person name="Rosovitz M.J."/>
            <person name="Sullivan S.A."/>
            <person name="Khouri H."/>
            <person name="Dimitrov G.I."/>
            <person name="Watkins K.L."/>
            <person name="Mulligan S."/>
            <person name="Benton J."/>
            <person name="Radune D."/>
            <person name="Fisher D.J."/>
            <person name="Atkins H.S."/>
            <person name="Hiscox T."/>
            <person name="Jost B.H."/>
            <person name="Billington S.J."/>
            <person name="Songer J.G."/>
            <person name="McClane B.A."/>
            <person name="Titball R.W."/>
            <person name="Rood J.I."/>
            <person name="Melville S.B."/>
            <person name="Paulsen I.T."/>
        </authorList>
    </citation>
    <scope>NUCLEOTIDE SEQUENCE [LARGE SCALE GENOMIC DNA]</scope>
    <source>
        <strain>ATCC 13124 / DSM 756 / JCM 1290 / NCIMB 6125 / NCTC 8237 / S 107 / Type A</strain>
    </source>
</reference>